<name>DGTL1_DEIGD</name>
<dbReference type="EMBL" id="CP000359">
    <property type="protein sequence ID" value="ABF46099.1"/>
    <property type="molecule type" value="Genomic_DNA"/>
</dbReference>
<dbReference type="RefSeq" id="WP_011530929.1">
    <property type="nucleotide sequence ID" value="NC_008025.1"/>
</dbReference>
<dbReference type="SMR" id="Q1IXD5"/>
<dbReference type="STRING" id="319795.Dgeo_1804"/>
<dbReference type="KEGG" id="dge:Dgeo_1804"/>
<dbReference type="eggNOG" id="COG0232">
    <property type="taxonomic scope" value="Bacteria"/>
</dbReference>
<dbReference type="HOGENOM" id="CLU_028163_1_0_0"/>
<dbReference type="Proteomes" id="UP000002431">
    <property type="component" value="Chromosome"/>
</dbReference>
<dbReference type="GO" id="GO:0008832">
    <property type="term" value="F:dGTPase activity"/>
    <property type="evidence" value="ECO:0007669"/>
    <property type="project" value="TreeGrafter"/>
</dbReference>
<dbReference type="GO" id="GO:0006203">
    <property type="term" value="P:dGTP catabolic process"/>
    <property type="evidence" value="ECO:0007669"/>
    <property type="project" value="TreeGrafter"/>
</dbReference>
<dbReference type="CDD" id="cd00077">
    <property type="entry name" value="HDc"/>
    <property type="match status" value="1"/>
</dbReference>
<dbReference type="FunFam" id="1.10.3210.10:FF:000024">
    <property type="entry name" value="Deoxyguanosinetriphosphate triphosphohydrolase-like protein"/>
    <property type="match status" value="1"/>
</dbReference>
<dbReference type="Gene3D" id="1.10.3210.10">
    <property type="entry name" value="Hypothetical protein af1432"/>
    <property type="match status" value="1"/>
</dbReference>
<dbReference type="HAMAP" id="MF_01212">
    <property type="entry name" value="dGTPase_type2"/>
    <property type="match status" value="1"/>
</dbReference>
<dbReference type="InterPro" id="IPR006261">
    <property type="entry name" value="dGTPase"/>
</dbReference>
<dbReference type="InterPro" id="IPR050135">
    <property type="entry name" value="dGTPase-like"/>
</dbReference>
<dbReference type="InterPro" id="IPR023023">
    <property type="entry name" value="dNTPase_2"/>
</dbReference>
<dbReference type="InterPro" id="IPR003607">
    <property type="entry name" value="HD/PDEase_dom"/>
</dbReference>
<dbReference type="InterPro" id="IPR006674">
    <property type="entry name" value="HD_domain"/>
</dbReference>
<dbReference type="InterPro" id="IPR026875">
    <property type="entry name" value="PHydrolase_assoc_dom"/>
</dbReference>
<dbReference type="NCBIfam" id="TIGR01353">
    <property type="entry name" value="dGTP_triPase"/>
    <property type="match status" value="1"/>
</dbReference>
<dbReference type="NCBIfam" id="NF002326">
    <property type="entry name" value="PRK01286.1-1"/>
    <property type="match status" value="1"/>
</dbReference>
<dbReference type="PANTHER" id="PTHR11373:SF43">
    <property type="entry name" value="DEOXYGUANOSINETRIPHOSPHATE TRIPHOSPHOHYDROLASE-LIKE PROTEIN"/>
    <property type="match status" value="1"/>
</dbReference>
<dbReference type="PANTHER" id="PTHR11373">
    <property type="entry name" value="DEOXYNUCLEOSIDE TRIPHOSPHATE TRIPHOSPHOHYDROLASE"/>
    <property type="match status" value="1"/>
</dbReference>
<dbReference type="Pfam" id="PF01966">
    <property type="entry name" value="HD"/>
    <property type="match status" value="1"/>
</dbReference>
<dbReference type="Pfam" id="PF13286">
    <property type="entry name" value="HD_assoc"/>
    <property type="match status" value="1"/>
</dbReference>
<dbReference type="SMART" id="SM00471">
    <property type="entry name" value="HDc"/>
    <property type="match status" value="1"/>
</dbReference>
<dbReference type="SUPFAM" id="SSF109604">
    <property type="entry name" value="HD-domain/PDEase-like"/>
    <property type="match status" value="1"/>
</dbReference>
<dbReference type="PROSITE" id="PS51831">
    <property type="entry name" value="HD"/>
    <property type="match status" value="1"/>
</dbReference>
<reference key="1">
    <citation type="submission" date="2006-04" db="EMBL/GenBank/DDBJ databases">
        <title>Complete sequence of chromosome of Deinococcus geothermalis DSM 11300.</title>
        <authorList>
            <person name="Copeland A."/>
            <person name="Lucas S."/>
            <person name="Lapidus A."/>
            <person name="Barry K."/>
            <person name="Detter J.C."/>
            <person name="Glavina del Rio T."/>
            <person name="Hammon N."/>
            <person name="Israni S."/>
            <person name="Dalin E."/>
            <person name="Tice H."/>
            <person name="Pitluck S."/>
            <person name="Brettin T."/>
            <person name="Bruce D."/>
            <person name="Han C."/>
            <person name="Tapia R."/>
            <person name="Saunders E."/>
            <person name="Gilna P."/>
            <person name="Schmutz J."/>
            <person name="Larimer F."/>
            <person name="Land M."/>
            <person name="Hauser L."/>
            <person name="Kyrpides N."/>
            <person name="Kim E."/>
            <person name="Daly M.J."/>
            <person name="Fredrickson J.K."/>
            <person name="Makarova K.S."/>
            <person name="Gaidamakova E.K."/>
            <person name="Zhai M."/>
            <person name="Richardson P."/>
        </authorList>
    </citation>
    <scope>NUCLEOTIDE SEQUENCE [LARGE SCALE GENOMIC DNA]</scope>
    <source>
        <strain>DSM 11300 / CIP 105573 / AG-3a</strain>
    </source>
</reference>
<feature type="chain" id="PRO_1000066416" description="Deoxyguanosinetriphosphate triphosphohydrolase-like protein">
    <location>
        <begin position="1"/>
        <end position="385"/>
    </location>
</feature>
<feature type="domain" description="HD" evidence="2">
    <location>
        <begin position="75"/>
        <end position="197"/>
    </location>
</feature>
<protein>
    <recommendedName>
        <fullName evidence="1">Deoxyguanosinetriphosphate triphosphohydrolase-like protein</fullName>
    </recommendedName>
</protein>
<evidence type="ECO:0000255" key="1">
    <source>
        <dbReference type="HAMAP-Rule" id="MF_01212"/>
    </source>
</evidence>
<evidence type="ECO:0000255" key="2">
    <source>
        <dbReference type="PROSITE-ProRule" id="PRU01175"/>
    </source>
</evidence>
<keyword id="KW-0378">Hydrolase</keyword>
<comment type="similarity">
    <text evidence="1">Belongs to the dGTPase family. Type 2 subfamily.</text>
</comment>
<accession>Q1IXD5</accession>
<sequence>MLTRADLEAREAATLAPYATLSAQSRGREYPEAESATRTAFQKDRDRILHTTAFRRLEYKTQVFVNAQGDHYRTRLTHTLEVGQVARSVALTLGLNETLAEAIALAHDLGHPPFGHAGERVLDTLMAEYGVPPENTFDHNTQARRIVTRLEDRYPDFPGLNLTLETLDGLNKHDRAGLGPPSLEAQLVDAADALAYTAHDLDDGLRSGLLTPQQLETLPLWRELLARVPVQSPQLTERDRRTLHRELLGWLIEDLTTASEAAIRARGVTSAAEVRALPERLITYSAPMRELLHETGLFLREHLYRHWRVEMQVEQAARLLQTLFTAYLARPSMLPPQVRAQAELDGLPRAICDFMAGMTDRYATEMYAALVPTSGPVSWLGELRN</sequence>
<organism>
    <name type="scientific">Deinococcus geothermalis (strain DSM 11300 / CIP 105573 / AG-3a)</name>
    <dbReference type="NCBI Taxonomy" id="319795"/>
    <lineage>
        <taxon>Bacteria</taxon>
        <taxon>Thermotogati</taxon>
        <taxon>Deinococcota</taxon>
        <taxon>Deinococci</taxon>
        <taxon>Deinococcales</taxon>
        <taxon>Deinococcaceae</taxon>
        <taxon>Deinococcus</taxon>
    </lineage>
</organism>
<gene>
    <name type="ordered locus">Dgeo_1804</name>
</gene>
<proteinExistence type="inferred from homology"/>